<name>UBP33_BOVIN</name>
<evidence type="ECO:0000250" key="1"/>
<evidence type="ECO:0000250" key="2">
    <source>
        <dbReference type="UniProtKB" id="Q8TEY7"/>
    </source>
</evidence>
<evidence type="ECO:0000255" key="3">
    <source>
        <dbReference type="PROSITE-ProRule" id="PRU00502"/>
    </source>
</evidence>
<evidence type="ECO:0000255" key="4">
    <source>
        <dbReference type="PROSITE-ProRule" id="PRU00613"/>
    </source>
</evidence>
<evidence type="ECO:0000255" key="5">
    <source>
        <dbReference type="PROSITE-ProRule" id="PRU10092"/>
    </source>
</evidence>
<evidence type="ECO:0000255" key="6">
    <source>
        <dbReference type="PROSITE-ProRule" id="PRU10093"/>
    </source>
</evidence>
<evidence type="ECO:0000256" key="7">
    <source>
        <dbReference type="SAM" id="MobiDB-lite"/>
    </source>
</evidence>
<evidence type="ECO:0000305" key="8"/>
<keyword id="KW-0963">Cytoplasm</keyword>
<keyword id="KW-0206">Cytoskeleton</keyword>
<keyword id="KW-0254">Endocytosis</keyword>
<keyword id="KW-0378">Hydrolase</keyword>
<keyword id="KW-0479">Metal-binding</keyword>
<keyword id="KW-0597">Phosphoprotein</keyword>
<keyword id="KW-0645">Protease</keyword>
<keyword id="KW-1185">Reference proteome</keyword>
<keyword id="KW-0677">Repeat</keyword>
<keyword id="KW-0788">Thiol protease</keyword>
<keyword id="KW-0832">Ubl conjugation</keyword>
<keyword id="KW-0833">Ubl conjugation pathway</keyword>
<keyword id="KW-0862">Zinc</keyword>
<keyword id="KW-0863">Zinc-finger</keyword>
<comment type="function">
    <text evidence="1">Deubiquitinating enzyme involved in various processes such as centrosome duplication, cellular migration and beta-2 adrenergic receptor/ADRB2 recycling. Involved in regulation of centrosome duplication by mediating deubiquitination of CCP110 in S and G2/M phase, leading to stabilize CCP110 during the period which centrioles duplicate and elongate. Involved in cell migration via its interaction with intracellular domain of ROBO1, leading to regulate the Slit signaling. Plays a role in commissural axon guidance cross the ventral midline of the neural tube in a Slit-dependent manner, possibly by mediating the deubiquitination of ROBO1. Acts as a regulator of G-protein coupled receptor (GPCR) signaling by mediating the deubiquitination of beta-arrestins (ARRB1 and ARRB2) and beta-2 adrenergic receptor (ADRB2). Plays a central role in ADRB2 recycling and resensitization after prolonged agonist stimulation by constitutively binding ADRB2, mediating deubiquitination of ADRB2 and inhibiting lysosomal trafficking of ADRB2. Upon dissociation, it is probably transferred to the translocated beta-arrestins, leading to beta-arrestins deubiquitination and disengagement from ADRB2. This suggests the existence of a dynamic exchange between the ADRB2 and beta-arrestins. Deubiquitinates DIO2, thereby regulating thyroid hormone regulation. Mediates deubiquitination of both 'Lys-48'- and 'Lys-63'-linked polyubiquitin chains (By similarity).</text>
</comment>
<comment type="catalytic activity">
    <reaction>
        <text>Thiol-dependent hydrolysis of ester, thioester, amide, peptide and isopeptide bonds formed by the C-terminal Gly of ubiquitin (a 76-residue protein attached to proteins as an intracellular targeting signal).</text>
        <dbReference type="EC" id="3.4.19.12"/>
    </reaction>
</comment>
<comment type="subunit">
    <text evidence="2">Interacts with VHL, leading to its ubiquitination and subsequent degradation (By similarity). Interacts with ARRB1 and ARRB2 (By similarity). Interacts with ADRB2 (By similarity). Interacts with DIO2 (By similarity). Interacts with ROBO1 (By similarity). Interacts with SELENBP1; in a selenium-dependent manner (By similarity). Interacts with CCP110 (By similarity).</text>
</comment>
<comment type="subcellular location">
    <subcellularLocation>
        <location evidence="2">Cytoplasm</location>
        <location evidence="2">Perinuclear region</location>
    </subcellularLocation>
    <subcellularLocation>
        <location evidence="2">Cytoplasm</location>
        <location evidence="2">Cytoskeleton</location>
        <location evidence="2">Microtubule organizing center</location>
        <location evidence="2">Centrosome</location>
    </subcellularLocation>
    <text evidence="2">Associates with centrosomes predominantly in S and G2 phases but less in G1 phase (By similarity).</text>
</comment>
<comment type="domain">
    <text evidence="1">The UBP-type zinc finger binds 3 zinc ions. However, it does not bind ubiquitin, probably because the conserved Arg in position 55 is replaced by a Glu residue (By similarity).</text>
</comment>
<comment type="PTM">
    <text evidence="1">Ubiquitinated via a VHL-dependent pathway for proteasomal degradation.</text>
</comment>
<comment type="similarity">
    <text evidence="8">Belongs to the peptidase C19 family. USP20/USP33 subfamily.</text>
</comment>
<accession>A6QNM7</accession>
<proteinExistence type="evidence at transcript level"/>
<dbReference type="EC" id="3.4.19.12"/>
<dbReference type="EMBL" id="BC148905">
    <property type="protein sequence ID" value="AAI48906.1"/>
    <property type="molecule type" value="mRNA"/>
</dbReference>
<dbReference type="RefSeq" id="NP_001094609.1">
    <property type="nucleotide sequence ID" value="NM_001101139.2"/>
</dbReference>
<dbReference type="FunCoup" id="A6QNM7">
    <property type="interactions" value="3299"/>
</dbReference>
<dbReference type="STRING" id="9913.ENSBTAP00000027667"/>
<dbReference type="MEROPS" id="C19.037"/>
<dbReference type="PaxDb" id="9913-ENSBTAP00000027667"/>
<dbReference type="GeneID" id="531706"/>
<dbReference type="KEGG" id="bta:531706"/>
<dbReference type="CTD" id="23032"/>
<dbReference type="VEuPathDB" id="HostDB:ENSBTAG00000020761"/>
<dbReference type="eggNOG" id="KOG1870">
    <property type="taxonomic scope" value="Eukaryota"/>
</dbReference>
<dbReference type="HOGENOM" id="CLU_004896_0_0_1"/>
<dbReference type="InParanoid" id="A6QNM7"/>
<dbReference type="OMA" id="LCSVICH"/>
<dbReference type="OrthoDB" id="73004at2759"/>
<dbReference type="TreeFam" id="TF352179"/>
<dbReference type="Reactome" id="R-BTA-5689880">
    <property type="pathway name" value="Ub-specific processing proteases"/>
</dbReference>
<dbReference type="Reactome" id="R-BTA-9010553">
    <property type="pathway name" value="Regulation of expression of SLITs and ROBOs"/>
</dbReference>
<dbReference type="Proteomes" id="UP000009136">
    <property type="component" value="Chromosome 3"/>
</dbReference>
<dbReference type="Bgee" id="ENSBTAG00000020761">
    <property type="expression patterns" value="Expressed in occipital lobe and 109 other cell types or tissues"/>
</dbReference>
<dbReference type="GO" id="GO:0005813">
    <property type="term" value="C:centrosome"/>
    <property type="evidence" value="ECO:0000250"/>
    <property type="project" value="UniProtKB"/>
</dbReference>
<dbReference type="GO" id="GO:0048471">
    <property type="term" value="C:perinuclear region of cytoplasm"/>
    <property type="evidence" value="ECO:0007669"/>
    <property type="project" value="UniProtKB-SubCell"/>
</dbReference>
<dbReference type="GO" id="GO:0004843">
    <property type="term" value="F:cysteine-type deubiquitinase activity"/>
    <property type="evidence" value="ECO:0000250"/>
    <property type="project" value="UniProtKB"/>
</dbReference>
<dbReference type="GO" id="GO:0004197">
    <property type="term" value="F:cysteine-type endopeptidase activity"/>
    <property type="evidence" value="ECO:0000250"/>
    <property type="project" value="UniProtKB"/>
</dbReference>
<dbReference type="GO" id="GO:0008270">
    <property type="term" value="F:zinc ion binding"/>
    <property type="evidence" value="ECO:0000250"/>
    <property type="project" value="UniProtKB"/>
</dbReference>
<dbReference type="GO" id="GO:0007411">
    <property type="term" value="P:axon guidance"/>
    <property type="evidence" value="ECO:0000250"/>
    <property type="project" value="UniProtKB"/>
</dbReference>
<dbReference type="GO" id="GO:0016477">
    <property type="term" value="P:cell migration"/>
    <property type="evidence" value="ECO:0000250"/>
    <property type="project" value="UniProtKB"/>
</dbReference>
<dbReference type="GO" id="GO:0051298">
    <property type="term" value="P:centrosome duplication"/>
    <property type="evidence" value="ECO:0000250"/>
    <property type="project" value="UniProtKB"/>
</dbReference>
<dbReference type="GO" id="GO:0006897">
    <property type="term" value="P:endocytosis"/>
    <property type="evidence" value="ECO:0007669"/>
    <property type="project" value="UniProtKB-KW"/>
</dbReference>
<dbReference type="GO" id="GO:0007399">
    <property type="term" value="P:nervous system development"/>
    <property type="evidence" value="ECO:0000318"/>
    <property type="project" value="GO_Central"/>
</dbReference>
<dbReference type="GO" id="GO:0016579">
    <property type="term" value="P:protein deubiquitination"/>
    <property type="evidence" value="ECO:0000250"/>
    <property type="project" value="UniProtKB"/>
</dbReference>
<dbReference type="GO" id="GO:0071108">
    <property type="term" value="P:protein K48-linked deubiquitination"/>
    <property type="evidence" value="ECO:0000250"/>
    <property type="project" value="UniProtKB"/>
</dbReference>
<dbReference type="GO" id="GO:0070536">
    <property type="term" value="P:protein K63-linked deubiquitination"/>
    <property type="evidence" value="ECO:0000250"/>
    <property type="project" value="UniProtKB"/>
</dbReference>
<dbReference type="GO" id="GO:0006508">
    <property type="term" value="P:proteolysis"/>
    <property type="evidence" value="ECO:0007669"/>
    <property type="project" value="UniProtKB-KW"/>
</dbReference>
<dbReference type="GO" id="GO:0008277">
    <property type="term" value="P:regulation of G protein-coupled receptor signaling pathway"/>
    <property type="evidence" value="ECO:0000250"/>
    <property type="project" value="UniProtKB"/>
</dbReference>
<dbReference type="CDD" id="cd02674">
    <property type="entry name" value="Peptidase_C19R"/>
    <property type="match status" value="1"/>
</dbReference>
<dbReference type="FunFam" id="3.30.2230.10:FF:000001">
    <property type="entry name" value="Ubiquitinyl hydrolase 1"/>
    <property type="match status" value="1"/>
</dbReference>
<dbReference type="FunFam" id="3.30.2230.10:FF:000002">
    <property type="entry name" value="Ubiquitinyl hydrolase 1"/>
    <property type="match status" value="1"/>
</dbReference>
<dbReference type="FunFam" id="3.30.40.10:FF:000065">
    <property type="entry name" value="Ubiquitinyl hydrolase 1"/>
    <property type="match status" value="1"/>
</dbReference>
<dbReference type="FunFam" id="3.90.70.10:FF:000056">
    <property type="entry name" value="Ubiquitinyl hydrolase 1"/>
    <property type="match status" value="1"/>
</dbReference>
<dbReference type="Gene3D" id="3.90.70.10">
    <property type="entry name" value="Cysteine proteinases"/>
    <property type="match status" value="1"/>
</dbReference>
<dbReference type="Gene3D" id="3.30.2230.10">
    <property type="entry name" value="DUSP-like"/>
    <property type="match status" value="2"/>
</dbReference>
<dbReference type="Gene3D" id="3.30.40.10">
    <property type="entry name" value="Zinc/RING finger domain, C3HC4 (zinc finger)"/>
    <property type="match status" value="1"/>
</dbReference>
<dbReference type="InterPro" id="IPR035927">
    <property type="entry name" value="DUSP-like_sf"/>
</dbReference>
<dbReference type="InterPro" id="IPR038765">
    <property type="entry name" value="Papain-like_cys_pep_sf"/>
</dbReference>
<dbReference type="InterPro" id="IPR006615">
    <property type="entry name" value="Pept_C19_DUSP"/>
</dbReference>
<dbReference type="InterPro" id="IPR001394">
    <property type="entry name" value="Peptidase_C19_UCH"/>
</dbReference>
<dbReference type="InterPro" id="IPR050185">
    <property type="entry name" value="Ub_carboxyl-term_hydrolase"/>
</dbReference>
<dbReference type="InterPro" id="IPR018200">
    <property type="entry name" value="USP_CS"/>
</dbReference>
<dbReference type="InterPro" id="IPR028889">
    <property type="entry name" value="USP_dom"/>
</dbReference>
<dbReference type="InterPro" id="IPR013083">
    <property type="entry name" value="Znf_RING/FYVE/PHD"/>
</dbReference>
<dbReference type="InterPro" id="IPR001607">
    <property type="entry name" value="Znf_UBP"/>
</dbReference>
<dbReference type="PANTHER" id="PTHR21646">
    <property type="entry name" value="UBIQUITIN CARBOXYL-TERMINAL HYDROLASE"/>
    <property type="match status" value="1"/>
</dbReference>
<dbReference type="PANTHER" id="PTHR21646:SF32">
    <property type="entry name" value="UBIQUITIN CARBOXYL-TERMINAL HYDROLASE 33"/>
    <property type="match status" value="1"/>
</dbReference>
<dbReference type="Pfam" id="PF06337">
    <property type="entry name" value="DUSP"/>
    <property type="match status" value="2"/>
</dbReference>
<dbReference type="Pfam" id="PF00443">
    <property type="entry name" value="UCH"/>
    <property type="match status" value="1"/>
</dbReference>
<dbReference type="Pfam" id="PF02148">
    <property type="entry name" value="zf-UBP"/>
    <property type="match status" value="1"/>
</dbReference>
<dbReference type="SMART" id="SM00695">
    <property type="entry name" value="DUSP"/>
    <property type="match status" value="2"/>
</dbReference>
<dbReference type="SMART" id="SM00290">
    <property type="entry name" value="ZnF_UBP"/>
    <property type="match status" value="1"/>
</dbReference>
<dbReference type="SUPFAM" id="SSF54001">
    <property type="entry name" value="Cysteine proteinases"/>
    <property type="match status" value="1"/>
</dbReference>
<dbReference type="SUPFAM" id="SSF143791">
    <property type="entry name" value="DUSP-like"/>
    <property type="match status" value="2"/>
</dbReference>
<dbReference type="SUPFAM" id="SSF57850">
    <property type="entry name" value="RING/U-box"/>
    <property type="match status" value="1"/>
</dbReference>
<dbReference type="PROSITE" id="PS51283">
    <property type="entry name" value="DUSP"/>
    <property type="match status" value="2"/>
</dbReference>
<dbReference type="PROSITE" id="PS00972">
    <property type="entry name" value="USP_1"/>
    <property type="match status" value="1"/>
</dbReference>
<dbReference type="PROSITE" id="PS00973">
    <property type="entry name" value="USP_2"/>
    <property type="match status" value="1"/>
</dbReference>
<dbReference type="PROSITE" id="PS50235">
    <property type="entry name" value="USP_3"/>
    <property type="match status" value="1"/>
</dbReference>
<dbReference type="PROSITE" id="PS50271">
    <property type="entry name" value="ZF_UBP"/>
    <property type="match status" value="1"/>
</dbReference>
<reference key="1">
    <citation type="submission" date="2007-07" db="EMBL/GenBank/DDBJ databases">
        <authorList>
            <consortium name="NIH - Mammalian Gene Collection (MGC) project"/>
        </authorList>
    </citation>
    <scope>NUCLEOTIDE SEQUENCE [LARGE SCALE MRNA]</scope>
    <source>
        <strain>Hereford</strain>
        <tissue>Hypothalamus</tissue>
    </source>
</reference>
<organism>
    <name type="scientific">Bos taurus</name>
    <name type="common">Bovine</name>
    <dbReference type="NCBI Taxonomy" id="9913"/>
    <lineage>
        <taxon>Eukaryota</taxon>
        <taxon>Metazoa</taxon>
        <taxon>Chordata</taxon>
        <taxon>Craniata</taxon>
        <taxon>Vertebrata</taxon>
        <taxon>Euteleostomi</taxon>
        <taxon>Mammalia</taxon>
        <taxon>Eutheria</taxon>
        <taxon>Laurasiatheria</taxon>
        <taxon>Artiodactyla</taxon>
        <taxon>Ruminantia</taxon>
        <taxon>Pecora</taxon>
        <taxon>Bovidae</taxon>
        <taxon>Bovinae</taxon>
        <taxon>Bos</taxon>
    </lineage>
</organism>
<gene>
    <name type="primary">USP33</name>
</gene>
<feature type="chain" id="PRO_0000390423" description="Ubiquitin carboxyl-terminal hydrolase 33">
    <location>
        <begin position="1"/>
        <end position="912"/>
    </location>
</feature>
<feature type="domain" description="USP">
    <location>
        <begin position="154"/>
        <end position="685"/>
    </location>
</feature>
<feature type="domain" description="DUSP 1" evidence="4">
    <location>
        <begin position="687"/>
        <end position="780"/>
    </location>
</feature>
<feature type="domain" description="DUSP 2" evidence="4">
    <location>
        <begin position="788"/>
        <end position="891"/>
    </location>
</feature>
<feature type="zinc finger region" description="UBP-type" evidence="3">
    <location>
        <begin position="6"/>
        <end position="109"/>
    </location>
</feature>
<feature type="region of interest" description="Disordered" evidence="7">
    <location>
        <begin position="274"/>
        <end position="334"/>
    </location>
</feature>
<feature type="region of interest" description="Disordered" evidence="7">
    <location>
        <begin position="403"/>
        <end position="433"/>
    </location>
</feature>
<feature type="compositionally biased region" description="Polar residues" evidence="7">
    <location>
        <begin position="284"/>
        <end position="296"/>
    </location>
</feature>
<feature type="compositionally biased region" description="Basic residues" evidence="7">
    <location>
        <begin position="422"/>
        <end position="433"/>
    </location>
</feature>
<feature type="active site" description="Nucleophile" evidence="5 6">
    <location>
        <position position="163"/>
    </location>
</feature>
<feature type="active site" description="Proton acceptor" evidence="5 6">
    <location>
        <position position="643"/>
    </location>
</feature>
<feature type="binding site" evidence="3">
    <location>
        <position position="8"/>
    </location>
    <ligand>
        <name>Zn(2+)</name>
        <dbReference type="ChEBI" id="CHEBI:29105"/>
        <label>1</label>
    </ligand>
</feature>
<feature type="binding site" evidence="3">
    <location>
        <position position="10"/>
    </location>
    <ligand>
        <name>Zn(2+)</name>
        <dbReference type="ChEBI" id="CHEBI:29105"/>
        <label>1</label>
    </ligand>
</feature>
<feature type="binding site" evidence="3">
    <location>
        <position position="30"/>
    </location>
    <ligand>
        <name>Zn(2+)</name>
        <dbReference type="ChEBI" id="CHEBI:29105"/>
        <label>2</label>
    </ligand>
</feature>
<feature type="binding site" evidence="3">
    <location>
        <position position="33"/>
    </location>
    <ligand>
        <name>Zn(2+)</name>
        <dbReference type="ChEBI" id="CHEBI:29105"/>
        <label>2</label>
    </ligand>
</feature>
<feature type="binding site" evidence="3">
    <location>
        <position position="43"/>
    </location>
    <ligand>
        <name>Zn(2+)</name>
        <dbReference type="ChEBI" id="CHEBI:29105"/>
        <label>3</label>
    </ligand>
</feature>
<feature type="binding site" evidence="3">
    <location>
        <position position="48"/>
    </location>
    <ligand>
        <name>Zn(2+)</name>
        <dbReference type="ChEBI" id="CHEBI:29105"/>
        <label>3</label>
    </ligand>
</feature>
<feature type="binding site" evidence="3">
    <location>
        <position position="53"/>
    </location>
    <ligand>
        <name>Zn(2+)</name>
        <dbReference type="ChEBI" id="CHEBI:29105"/>
        <label>2</label>
    </ligand>
</feature>
<feature type="binding site" evidence="3">
    <location>
        <position position="60"/>
    </location>
    <ligand>
        <name>Zn(2+)</name>
        <dbReference type="ChEBI" id="CHEBI:29105"/>
        <label>2</label>
    </ligand>
</feature>
<feature type="binding site" evidence="3">
    <location>
        <position position="64"/>
    </location>
    <ligand>
        <name>Zn(2+)</name>
        <dbReference type="ChEBI" id="CHEBI:29105"/>
        <label>3</label>
    </ligand>
</feature>
<feature type="binding site" evidence="3">
    <location>
        <position position="70"/>
    </location>
    <ligand>
        <name>Zn(2+)</name>
        <dbReference type="ChEBI" id="CHEBI:29105"/>
        <label>3</label>
    </ligand>
</feature>
<feature type="binding site" evidence="3">
    <location>
        <position position="83"/>
    </location>
    <ligand>
        <name>Zn(2+)</name>
        <dbReference type="ChEBI" id="CHEBI:29105"/>
        <label>1</label>
    </ligand>
</feature>
<feature type="binding site" evidence="3">
    <location>
        <position position="86"/>
    </location>
    <ligand>
        <name>Zn(2+)</name>
        <dbReference type="ChEBI" id="CHEBI:29105"/>
        <label>1</label>
    </ligand>
</feature>
<feature type="modified residue" description="Phosphoserine" evidence="2">
    <location>
        <position position="346"/>
    </location>
</feature>
<feature type="modified residue" description="Phosphoserine" evidence="2">
    <location>
        <position position="408"/>
    </location>
</feature>
<protein>
    <recommendedName>
        <fullName>Ubiquitin carboxyl-terminal hydrolase 33</fullName>
        <ecNumber>3.4.19.12</ecNumber>
    </recommendedName>
    <alternativeName>
        <fullName>Deubiquitinating enzyme 33</fullName>
    </alternativeName>
    <alternativeName>
        <fullName>Ubiquitin thioesterase 33</fullName>
    </alternativeName>
    <alternativeName>
        <fullName>Ubiquitin-specific-processing protease 33</fullName>
    </alternativeName>
</protein>
<sequence length="912" mass="103323">MSSFRSHCPHLDSVGEITKEDLIQKSHGSCQDCKVRGPNLWACLENRCSYVGCGESQVDHSTIHSQETKHYLTVNLTTLRVWCYACSKEVFLDRKLGTQPSLPHVKPLHQIQENGVQDFKIPSNTTLKTPLVAVFDDLDIEVEEEDELKARGLTGLKNIGNTCYMNAALQALSNCPPLTQFFLDCGGLARTDKKPAICKSYLKLMTELWHKSRPGSVVPTTLFQGIKTVNPTFRGYSQQDAQEFLRCLMDLLHEELKEQVMEVEEDPQTIMTEETMEEDKSQSDVDFQSCESCSSSDKAENENGSRSFSEDNNETTMLIQDDENNSEMSKDWQKEKMCNKINKVHSEGELDKDRDSVSETADLNNQETVKVQIHSRASEYITDVHLNDLSTPQILPSNEGVNPRLSASPPKSGNLWPGLPPTHKKVQSALSPKRKKQHKKYRSVISDIFDGTIISSVQCLTCDRVSVTLETFQDLSLPIPGKEDLAKLHSSSHPTSIVKAGSCGEAYAPQGWIAFFMEYVKRFVVSCVPSWFWGPVVTLQDCLAAFFARDELKGDNMYSCEKCKKLRNGVKFCKVQKFPEILCIHLKRFRHELMFSTKISTHVSFPLEGLDLQPFLAKDSPVQIVTYDLLSVICHHGTASSGHYIAYCRNNLNNLWYEFDDQSVTEVSESTVQNAEAYVLFYRKSSEEAQKERRRISNLLNIMEPSLLQFYISRQWLNKFKTFAEPGPISNNDFLCIHGGVPPRKAGYIEDLVLMLPQNIWDNLYSRYGGGPAVNHLYICHTCQIEAEKIEKRRKTELEIFIRLNRAFQEEDSPATFYCISMQWFREWESFVKGKDGDPPGPIDNTKIAVTKCGNVILRQGADSGQISEETWNFLQSIYGGGPEVILRPPVVHVDPDAVQAEEKIEVETRSL</sequence>